<accession>A0RQ93</accession>
<comment type="function">
    <text evidence="1">Catalyzes the formation of N(7)-methylguanine at position 46 (m7G46) in tRNA.</text>
</comment>
<comment type="catalytic activity">
    <reaction evidence="1">
        <text>guanosine(46) in tRNA + S-adenosyl-L-methionine = N(7)-methylguanosine(46) in tRNA + S-adenosyl-L-homocysteine</text>
        <dbReference type="Rhea" id="RHEA:42708"/>
        <dbReference type="Rhea" id="RHEA-COMP:10188"/>
        <dbReference type="Rhea" id="RHEA-COMP:10189"/>
        <dbReference type="ChEBI" id="CHEBI:57856"/>
        <dbReference type="ChEBI" id="CHEBI:59789"/>
        <dbReference type="ChEBI" id="CHEBI:74269"/>
        <dbReference type="ChEBI" id="CHEBI:74480"/>
        <dbReference type="EC" id="2.1.1.33"/>
    </reaction>
</comment>
<comment type="pathway">
    <text evidence="1">tRNA modification; N(7)-methylguanine-tRNA biosynthesis.</text>
</comment>
<comment type="similarity">
    <text evidence="1">Belongs to the class I-like SAM-binding methyltransferase superfamily. TrmB family.</text>
</comment>
<sequence>MPNFVATSLKNLKFPFGADGVEFLWSAKAGDESLIYTKTGKKEFFLLVKDKKTEFVVKSDKLTRPASLGTIQKALSVYKDLNVLDLKSSTIAIKNEKQLAKKEFILNDIQFLEKLKSGEFKKIFVEIGFGSGRHLLYQAKTDENTLVVGIEVYKRSCEQVNNLALSMGLKNVILLNLDARLVMSLLHSNSVDRLFLHFPVPWEKSEKRRVVSAEFANECQRVLKSGGSFELRSDDKNYTDFTISCFLNLKEAKMEIYKNRFLDVSSKYEDRWIKQNRDIYDVVFTNLIVSEQKVLHGDFEFGTVLEEDILSKFENKTIKKDDYFIHMERIYKKDSSEKNGGLLLRVAFGSFYRPEHCFILVENSKASYFIKKPLLTYENLKAHSTLKEYLSCSTS</sequence>
<protein>
    <recommendedName>
        <fullName evidence="1">tRNA (guanine-N(7)-)-methyltransferase</fullName>
        <ecNumber evidence="1">2.1.1.33</ecNumber>
    </recommendedName>
    <alternativeName>
        <fullName evidence="1">tRNA (guanine(46)-N(7))-methyltransferase</fullName>
    </alternativeName>
    <alternativeName>
        <fullName evidence="1">tRNA(m7G46)-methyltransferase</fullName>
    </alternativeName>
</protein>
<evidence type="ECO:0000255" key="1">
    <source>
        <dbReference type="HAMAP-Rule" id="MF_01057"/>
    </source>
</evidence>
<dbReference type="EC" id="2.1.1.33" evidence="1"/>
<dbReference type="EMBL" id="CP000487">
    <property type="protein sequence ID" value="ABK82983.1"/>
    <property type="molecule type" value="Genomic_DNA"/>
</dbReference>
<dbReference type="RefSeq" id="WP_002849909.1">
    <property type="nucleotide sequence ID" value="NC_008599.1"/>
</dbReference>
<dbReference type="SMR" id="A0RQ93"/>
<dbReference type="GeneID" id="61065043"/>
<dbReference type="KEGG" id="cff:CFF8240_1218"/>
<dbReference type="eggNOG" id="COG0220">
    <property type="taxonomic scope" value="Bacteria"/>
</dbReference>
<dbReference type="HOGENOM" id="CLU_041532_0_0_7"/>
<dbReference type="UniPathway" id="UPA00989"/>
<dbReference type="Proteomes" id="UP000000760">
    <property type="component" value="Chromosome"/>
</dbReference>
<dbReference type="GO" id="GO:0043527">
    <property type="term" value="C:tRNA methyltransferase complex"/>
    <property type="evidence" value="ECO:0007669"/>
    <property type="project" value="TreeGrafter"/>
</dbReference>
<dbReference type="GO" id="GO:0008176">
    <property type="term" value="F:tRNA (guanine(46)-N7)-methyltransferase activity"/>
    <property type="evidence" value="ECO:0007669"/>
    <property type="project" value="UniProtKB-UniRule"/>
</dbReference>
<dbReference type="CDD" id="cd02440">
    <property type="entry name" value="AdoMet_MTases"/>
    <property type="match status" value="1"/>
</dbReference>
<dbReference type="Gene3D" id="3.40.50.150">
    <property type="entry name" value="Vaccinia Virus protein VP39"/>
    <property type="match status" value="1"/>
</dbReference>
<dbReference type="HAMAP" id="MF_01057">
    <property type="entry name" value="tRNA_methyltr_TrmB"/>
    <property type="match status" value="1"/>
</dbReference>
<dbReference type="InterPro" id="IPR029063">
    <property type="entry name" value="SAM-dependent_MTases_sf"/>
</dbReference>
<dbReference type="InterPro" id="IPR003358">
    <property type="entry name" value="tRNA_(Gua-N-7)_MeTrfase_Trmb"/>
</dbReference>
<dbReference type="InterPro" id="IPR055361">
    <property type="entry name" value="tRNA_methyltr_TrmB_bact"/>
</dbReference>
<dbReference type="NCBIfam" id="NF010719">
    <property type="entry name" value="PRK14121.1"/>
    <property type="match status" value="1"/>
</dbReference>
<dbReference type="NCBIfam" id="TIGR00091">
    <property type="entry name" value="tRNA (guanosine(46)-N7)-methyltransferase TrmB"/>
    <property type="match status" value="1"/>
</dbReference>
<dbReference type="PANTHER" id="PTHR23417">
    <property type="entry name" value="3-DEOXY-D-MANNO-OCTULOSONIC-ACID TRANSFERASE/TRNA GUANINE-N 7 - -METHYLTRANSFERASE"/>
    <property type="match status" value="1"/>
</dbReference>
<dbReference type="PANTHER" id="PTHR23417:SF14">
    <property type="entry name" value="PENTACOTRIPEPTIDE-REPEAT REGION OF PRORP DOMAIN-CONTAINING PROTEIN"/>
    <property type="match status" value="1"/>
</dbReference>
<dbReference type="Pfam" id="PF02390">
    <property type="entry name" value="Methyltransf_4"/>
    <property type="match status" value="1"/>
</dbReference>
<dbReference type="SUPFAM" id="SSF53335">
    <property type="entry name" value="S-adenosyl-L-methionine-dependent methyltransferases"/>
    <property type="match status" value="1"/>
</dbReference>
<dbReference type="PROSITE" id="PS51625">
    <property type="entry name" value="SAM_MT_TRMB"/>
    <property type="match status" value="1"/>
</dbReference>
<reference key="1">
    <citation type="submission" date="2006-11" db="EMBL/GenBank/DDBJ databases">
        <title>Sequence of Campylobacter fetus subsp. fetus 82-40.</title>
        <authorList>
            <person name="Fouts D.E."/>
            <person name="Nelson K.E."/>
        </authorList>
    </citation>
    <scope>NUCLEOTIDE SEQUENCE [LARGE SCALE GENOMIC DNA]</scope>
    <source>
        <strain>82-40</strain>
    </source>
</reference>
<gene>
    <name evidence="1" type="primary">trmB</name>
    <name type="ordered locus">CFF8240_1218</name>
</gene>
<organism>
    <name type="scientific">Campylobacter fetus subsp. fetus (strain 82-40)</name>
    <dbReference type="NCBI Taxonomy" id="360106"/>
    <lineage>
        <taxon>Bacteria</taxon>
        <taxon>Pseudomonadati</taxon>
        <taxon>Campylobacterota</taxon>
        <taxon>Epsilonproteobacteria</taxon>
        <taxon>Campylobacterales</taxon>
        <taxon>Campylobacteraceae</taxon>
        <taxon>Campylobacter</taxon>
    </lineage>
</organism>
<name>TRMB_CAMFF</name>
<keyword id="KW-0489">Methyltransferase</keyword>
<keyword id="KW-0949">S-adenosyl-L-methionine</keyword>
<keyword id="KW-0808">Transferase</keyword>
<keyword id="KW-0819">tRNA processing</keyword>
<feature type="chain" id="PRO_0000288132" description="tRNA (guanine-N(7)-)-methyltransferase">
    <location>
        <begin position="1"/>
        <end position="395"/>
    </location>
</feature>
<feature type="binding site" evidence="1">
    <location>
        <position position="126"/>
    </location>
    <ligand>
        <name>S-adenosyl-L-methionine</name>
        <dbReference type="ChEBI" id="CHEBI:59789"/>
    </ligand>
</feature>
<feature type="binding site" evidence="1">
    <location>
        <position position="151"/>
    </location>
    <ligand>
        <name>S-adenosyl-L-methionine</name>
        <dbReference type="ChEBI" id="CHEBI:59789"/>
    </ligand>
</feature>
<feature type="binding site" evidence="1">
    <location>
        <position position="178"/>
    </location>
    <ligand>
        <name>S-adenosyl-L-methionine</name>
        <dbReference type="ChEBI" id="CHEBI:59789"/>
    </ligand>
</feature>
<feature type="binding site" evidence="1">
    <location>
        <position position="204"/>
    </location>
    <ligand>
        <name>substrate</name>
    </ligand>
</feature>
<feature type="binding site" evidence="1">
    <location>
        <position position="234"/>
    </location>
    <ligand>
        <name>substrate</name>
    </ligand>
</feature>
<proteinExistence type="inferred from homology"/>